<organism>
    <name type="scientific">Corynebacterium efficiens (strain DSM 44549 / YS-314 / AJ 12310 / JCM 11189 / NBRC 100395)</name>
    <dbReference type="NCBI Taxonomy" id="196164"/>
    <lineage>
        <taxon>Bacteria</taxon>
        <taxon>Bacillati</taxon>
        <taxon>Actinomycetota</taxon>
        <taxon>Actinomycetes</taxon>
        <taxon>Mycobacteriales</taxon>
        <taxon>Corynebacteriaceae</taxon>
        <taxon>Corynebacterium</taxon>
    </lineage>
</organism>
<accession>Q8FU86</accession>
<keyword id="KW-0068">Autocatalytic cleavage</keyword>
<keyword id="KW-0963">Cytoplasm</keyword>
<keyword id="KW-0210">Decarboxylase</keyword>
<keyword id="KW-0456">Lyase</keyword>
<keyword id="KW-0566">Pantothenate biosynthesis</keyword>
<keyword id="KW-0670">Pyruvate</keyword>
<keyword id="KW-1185">Reference proteome</keyword>
<keyword id="KW-0704">Schiff base</keyword>
<keyword id="KW-0865">Zymogen</keyword>
<protein>
    <recommendedName>
        <fullName evidence="1">Aspartate 1-decarboxylase</fullName>
        <ecNumber evidence="1">4.1.1.11</ecNumber>
    </recommendedName>
    <alternativeName>
        <fullName evidence="1">Aspartate alpha-decarboxylase</fullName>
    </alternativeName>
    <component>
        <recommendedName>
            <fullName evidence="1">Aspartate 1-decarboxylase beta chain</fullName>
        </recommendedName>
    </component>
    <component>
        <recommendedName>
            <fullName evidence="1">Aspartate 1-decarboxylase alpha chain</fullName>
        </recommendedName>
    </component>
</protein>
<feature type="chain" id="PRO_0000023065" description="Aspartate 1-decarboxylase beta chain" evidence="1">
    <location>
        <begin position="1"/>
        <end position="24"/>
    </location>
</feature>
<feature type="chain" id="PRO_0000023066" description="Aspartate 1-decarboxylase alpha chain" evidence="1">
    <location>
        <begin position="25"/>
        <end position="136"/>
    </location>
</feature>
<feature type="active site" description="Schiff-base intermediate with substrate; via pyruvic acid" evidence="1">
    <location>
        <position position="25"/>
    </location>
</feature>
<feature type="active site" description="Proton donor" evidence="1">
    <location>
        <position position="58"/>
    </location>
</feature>
<feature type="binding site" evidence="1">
    <location>
        <position position="57"/>
    </location>
    <ligand>
        <name>substrate</name>
    </ligand>
</feature>
<feature type="binding site" evidence="1">
    <location>
        <begin position="73"/>
        <end position="75"/>
    </location>
    <ligand>
        <name>substrate</name>
    </ligand>
</feature>
<feature type="modified residue" description="Pyruvic acid (Ser)" evidence="1">
    <location>
        <position position="25"/>
    </location>
</feature>
<proteinExistence type="inferred from homology"/>
<dbReference type="EC" id="4.1.1.11" evidence="1"/>
<dbReference type="EMBL" id="BA000035">
    <property type="protein sequence ID" value="BAC16945.1"/>
    <property type="molecule type" value="Genomic_DNA"/>
</dbReference>
<dbReference type="RefSeq" id="WP_006768557.1">
    <property type="nucleotide sequence ID" value="NC_004369.1"/>
</dbReference>
<dbReference type="SMR" id="Q8FU86"/>
<dbReference type="STRING" id="196164.gene:10740525"/>
<dbReference type="KEGG" id="cef:CE0135"/>
<dbReference type="eggNOG" id="COG0853">
    <property type="taxonomic scope" value="Bacteria"/>
</dbReference>
<dbReference type="HOGENOM" id="CLU_115305_2_0_11"/>
<dbReference type="OrthoDB" id="9803983at2"/>
<dbReference type="UniPathway" id="UPA00028">
    <property type="reaction ID" value="UER00002"/>
</dbReference>
<dbReference type="Proteomes" id="UP000001409">
    <property type="component" value="Chromosome"/>
</dbReference>
<dbReference type="GO" id="GO:0005829">
    <property type="term" value="C:cytosol"/>
    <property type="evidence" value="ECO:0007669"/>
    <property type="project" value="TreeGrafter"/>
</dbReference>
<dbReference type="GO" id="GO:0004068">
    <property type="term" value="F:aspartate 1-decarboxylase activity"/>
    <property type="evidence" value="ECO:0007669"/>
    <property type="project" value="UniProtKB-UniRule"/>
</dbReference>
<dbReference type="GO" id="GO:0006523">
    <property type="term" value="P:alanine biosynthetic process"/>
    <property type="evidence" value="ECO:0007669"/>
    <property type="project" value="InterPro"/>
</dbReference>
<dbReference type="GO" id="GO:0015940">
    <property type="term" value="P:pantothenate biosynthetic process"/>
    <property type="evidence" value="ECO:0007669"/>
    <property type="project" value="UniProtKB-UniRule"/>
</dbReference>
<dbReference type="CDD" id="cd06919">
    <property type="entry name" value="Asp_decarbox"/>
    <property type="match status" value="1"/>
</dbReference>
<dbReference type="Gene3D" id="2.40.40.20">
    <property type="match status" value="1"/>
</dbReference>
<dbReference type="HAMAP" id="MF_00446">
    <property type="entry name" value="PanD"/>
    <property type="match status" value="1"/>
</dbReference>
<dbReference type="InterPro" id="IPR009010">
    <property type="entry name" value="Asp_de-COase-like_dom_sf"/>
</dbReference>
<dbReference type="InterPro" id="IPR003190">
    <property type="entry name" value="Asp_decarbox"/>
</dbReference>
<dbReference type="NCBIfam" id="TIGR00223">
    <property type="entry name" value="panD"/>
    <property type="match status" value="1"/>
</dbReference>
<dbReference type="PANTHER" id="PTHR21012">
    <property type="entry name" value="ASPARTATE 1-DECARBOXYLASE"/>
    <property type="match status" value="1"/>
</dbReference>
<dbReference type="PANTHER" id="PTHR21012:SF0">
    <property type="entry name" value="ASPARTATE 1-DECARBOXYLASE"/>
    <property type="match status" value="1"/>
</dbReference>
<dbReference type="Pfam" id="PF02261">
    <property type="entry name" value="Asp_decarbox"/>
    <property type="match status" value="1"/>
</dbReference>
<dbReference type="PIRSF" id="PIRSF006246">
    <property type="entry name" value="Asp_decarbox"/>
    <property type="match status" value="1"/>
</dbReference>
<dbReference type="SUPFAM" id="SSF50692">
    <property type="entry name" value="ADC-like"/>
    <property type="match status" value="1"/>
</dbReference>
<name>PAND_COREF</name>
<sequence>MLRTILGSKIHRATVTQADLDYVGSITIDADLVNAAGLIEGEKVAVVDITNGARIETYVITGDAGTGSICINGAAAHLINPGDLVIIMSYLQATDAEARAYQPNIVHVDADNRIVALGNDAGEPIPGSSLLSSRSL</sequence>
<gene>
    <name evidence="1" type="primary">panD</name>
    <name type="ordered locus">CE0135</name>
</gene>
<reference key="1">
    <citation type="journal article" date="2003" name="Genome Res.">
        <title>Comparative complete genome sequence analysis of the amino acid replacements responsible for the thermostability of Corynebacterium efficiens.</title>
        <authorList>
            <person name="Nishio Y."/>
            <person name="Nakamura Y."/>
            <person name="Kawarabayasi Y."/>
            <person name="Usuda Y."/>
            <person name="Kimura E."/>
            <person name="Sugimoto S."/>
            <person name="Matsui K."/>
            <person name="Yamagishi A."/>
            <person name="Kikuchi H."/>
            <person name="Ikeo K."/>
            <person name="Gojobori T."/>
        </authorList>
    </citation>
    <scope>NUCLEOTIDE SEQUENCE [LARGE SCALE GENOMIC DNA]</scope>
    <source>
        <strain>DSM 44549 / YS-314 / AJ 12310 / JCM 11189 / NBRC 100395</strain>
    </source>
</reference>
<evidence type="ECO:0000255" key="1">
    <source>
        <dbReference type="HAMAP-Rule" id="MF_00446"/>
    </source>
</evidence>
<comment type="function">
    <text evidence="1">Catalyzes the pyruvoyl-dependent decarboxylation of aspartate to produce beta-alanine.</text>
</comment>
<comment type="catalytic activity">
    <reaction evidence="1">
        <text>L-aspartate + H(+) = beta-alanine + CO2</text>
        <dbReference type="Rhea" id="RHEA:19497"/>
        <dbReference type="ChEBI" id="CHEBI:15378"/>
        <dbReference type="ChEBI" id="CHEBI:16526"/>
        <dbReference type="ChEBI" id="CHEBI:29991"/>
        <dbReference type="ChEBI" id="CHEBI:57966"/>
        <dbReference type="EC" id="4.1.1.11"/>
    </reaction>
</comment>
<comment type="cofactor">
    <cofactor evidence="1">
        <name>pyruvate</name>
        <dbReference type="ChEBI" id="CHEBI:15361"/>
    </cofactor>
    <text evidence="1">Binds 1 pyruvoyl group covalently per subunit.</text>
</comment>
<comment type="pathway">
    <text evidence="1">Cofactor biosynthesis; (R)-pantothenate biosynthesis; beta-alanine from L-aspartate: step 1/1.</text>
</comment>
<comment type="subunit">
    <text evidence="1">Heterooctamer of four alpha and four beta subunits.</text>
</comment>
<comment type="subcellular location">
    <subcellularLocation>
        <location evidence="1">Cytoplasm</location>
    </subcellularLocation>
</comment>
<comment type="PTM">
    <text evidence="1">Is synthesized initially as an inactive proenzyme, which is activated by self-cleavage at a specific serine bond to produce a beta-subunit with a hydroxyl group at its C-terminus and an alpha-subunit with a pyruvoyl group at its N-terminus.</text>
</comment>
<comment type="similarity">
    <text evidence="1">Belongs to the PanD family.</text>
</comment>